<gene>
    <name evidence="1" type="primary">mcsB</name>
    <name type="ordered locus">BCA_0109</name>
</gene>
<protein>
    <recommendedName>
        <fullName evidence="1">Protein-arginine kinase</fullName>
        <ecNumber evidence="1">2.7.14.1</ecNumber>
    </recommendedName>
</protein>
<comment type="function">
    <text evidence="1">Catalyzes the specific phosphorylation of arginine residues in a large number of proteins. Is part of the bacterial stress response system. Protein arginine phosphorylation has a physiologically important role and is involved in the regulation of many critical cellular processes, such as protein homeostasis, motility, competence, and stringent and stress responses, by regulating gene expression and protein activity.</text>
</comment>
<comment type="catalytic activity">
    <reaction evidence="1">
        <text>L-arginyl-[protein] + ATP = N(omega)-phospho-L-arginyl-[protein] + ADP + H(+)</text>
        <dbReference type="Rhea" id="RHEA:43384"/>
        <dbReference type="Rhea" id="RHEA-COMP:10532"/>
        <dbReference type="Rhea" id="RHEA-COMP:10533"/>
        <dbReference type="ChEBI" id="CHEBI:15378"/>
        <dbReference type="ChEBI" id="CHEBI:29965"/>
        <dbReference type="ChEBI" id="CHEBI:30616"/>
        <dbReference type="ChEBI" id="CHEBI:83226"/>
        <dbReference type="ChEBI" id="CHEBI:456216"/>
        <dbReference type="EC" id="2.7.14.1"/>
    </reaction>
</comment>
<comment type="activity regulation">
    <text evidence="1">Appears to be allosterically activated by the binding of pArg-containing polypeptides to the pArg-binding pocket localized in the C-terminal domain of McsB.</text>
</comment>
<comment type="similarity">
    <text evidence="1">Belongs to the ATP:guanido phosphotransferase family.</text>
</comment>
<dbReference type="EC" id="2.7.14.1" evidence="1"/>
<dbReference type="EMBL" id="CP001407">
    <property type="protein sequence ID" value="ACO28819.1"/>
    <property type="molecule type" value="Genomic_DNA"/>
</dbReference>
<dbReference type="RefSeq" id="WP_000050832.1">
    <property type="nucleotide sequence ID" value="NZ_CP009318.1"/>
</dbReference>
<dbReference type="SMR" id="C1ET10"/>
<dbReference type="KEGG" id="bcx:BCA_0109"/>
<dbReference type="PATRIC" id="fig|572264.18.peg.145"/>
<dbReference type="Proteomes" id="UP000002210">
    <property type="component" value="Chromosome"/>
</dbReference>
<dbReference type="GO" id="GO:0005615">
    <property type="term" value="C:extracellular space"/>
    <property type="evidence" value="ECO:0007669"/>
    <property type="project" value="TreeGrafter"/>
</dbReference>
<dbReference type="GO" id="GO:0005524">
    <property type="term" value="F:ATP binding"/>
    <property type="evidence" value="ECO:0007669"/>
    <property type="project" value="UniProtKB-KW"/>
</dbReference>
<dbReference type="GO" id="GO:0004111">
    <property type="term" value="F:creatine kinase activity"/>
    <property type="evidence" value="ECO:0007669"/>
    <property type="project" value="InterPro"/>
</dbReference>
<dbReference type="GO" id="GO:0004672">
    <property type="term" value="F:protein kinase activity"/>
    <property type="evidence" value="ECO:0007669"/>
    <property type="project" value="UniProtKB-UniRule"/>
</dbReference>
<dbReference type="GO" id="GO:0046314">
    <property type="term" value="P:phosphocreatine biosynthetic process"/>
    <property type="evidence" value="ECO:0007669"/>
    <property type="project" value="InterPro"/>
</dbReference>
<dbReference type="CDD" id="cd07930">
    <property type="entry name" value="bacterial_phosphagen_kinase"/>
    <property type="match status" value="1"/>
</dbReference>
<dbReference type="FunFam" id="3.30.590.10:FF:000007">
    <property type="entry name" value="Protein-arginine kinase"/>
    <property type="match status" value="1"/>
</dbReference>
<dbReference type="Gene3D" id="3.30.590.10">
    <property type="entry name" value="Glutamine synthetase/guanido kinase, catalytic domain"/>
    <property type="match status" value="1"/>
</dbReference>
<dbReference type="HAMAP" id="MF_00602">
    <property type="entry name" value="Prot_Arg_kinase"/>
    <property type="match status" value="1"/>
</dbReference>
<dbReference type="InterPro" id="IPR023660">
    <property type="entry name" value="Arg_Kinase"/>
</dbReference>
<dbReference type="InterPro" id="IPR000749">
    <property type="entry name" value="ATP-guanido_PTrfase"/>
</dbReference>
<dbReference type="InterPro" id="IPR022415">
    <property type="entry name" value="ATP-guanido_PTrfase_AS"/>
</dbReference>
<dbReference type="InterPro" id="IPR022414">
    <property type="entry name" value="ATP-guanido_PTrfase_cat"/>
</dbReference>
<dbReference type="InterPro" id="IPR014746">
    <property type="entry name" value="Gln_synth/guanido_kin_cat_dom"/>
</dbReference>
<dbReference type="NCBIfam" id="NF002194">
    <property type="entry name" value="PRK01059.1-4"/>
    <property type="match status" value="1"/>
</dbReference>
<dbReference type="NCBIfam" id="NF002195">
    <property type="entry name" value="PRK01059.1-5"/>
    <property type="match status" value="1"/>
</dbReference>
<dbReference type="PANTHER" id="PTHR11547:SF38">
    <property type="entry name" value="ARGININE KINASE 1-RELATED"/>
    <property type="match status" value="1"/>
</dbReference>
<dbReference type="PANTHER" id="PTHR11547">
    <property type="entry name" value="ARGININE OR CREATINE KINASE"/>
    <property type="match status" value="1"/>
</dbReference>
<dbReference type="Pfam" id="PF00217">
    <property type="entry name" value="ATP-gua_Ptrans"/>
    <property type="match status" value="1"/>
</dbReference>
<dbReference type="SUPFAM" id="SSF55931">
    <property type="entry name" value="Glutamine synthetase/guanido kinase"/>
    <property type="match status" value="1"/>
</dbReference>
<dbReference type="PROSITE" id="PS00112">
    <property type="entry name" value="PHOSPHAGEN_KINASE"/>
    <property type="match status" value="1"/>
</dbReference>
<dbReference type="PROSITE" id="PS51510">
    <property type="entry name" value="PHOSPHAGEN_KINASE_C"/>
    <property type="match status" value="1"/>
</dbReference>
<reference key="1">
    <citation type="submission" date="2009-02" db="EMBL/GenBank/DDBJ databases">
        <title>Genome sequence of Bacillus cereus 03BB102.</title>
        <authorList>
            <person name="Dodson R.J."/>
            <person name="Jackson P."/>
            <person name="Munk A.C."/>
            <person name="Brettin T."/>
            <person name="Bruce D."/>
            <person name="Detter C."/>
            <person name="Tapia R."/>
            <person name="Han C."/>
            <person name="Sutton G."/>
            <person name="Sims D."/>
        </authorList>
    </citation>
    <scope>NUCLEOTIDE SEQUENCE [LARGE SCALE GENOMIC DNA]</scope>
    <source>
        <strain>03BB102</strain>
    </source>
</reference>
<sequence length="354" mass="40035">MSLDKIMNEAISPWMKGDGPDSDIVLSSRIRLARNFKKYQFSTMQNEEETKQIQELFKKEFINKTVEPFGEFELLKMNELTPLQRRVLVEKHLISPNLAGTEYGACLLSESEHISVMLNEEDHIRIQCLFSGLQLSEALQSANQIDNWIEKEVEYAFDESLGYITSCPTNVGTGLRASVMIHLPGLVLTKRISRIIQVIQKLGLVVRGIYGEGSEALGNIFQVSNQMTLGKSEEDIIADLKSVIQQIIQQEKMARELIVQNSSIELEDKVYRSYGILANSRLIQSAEAANCLSDLRLGIDLGYIQGISRNILTELMVLTQPGILQQYAGGPLGPEERDYRRATLIRERLRIEKN</sequence>
<accession>C1ET10</accession>
<proteinExistence type="inferred from homology"/>
<keyword id="KW-0021">Allosteric enzyme</keyword>
<keyword id="KW-0067">ATP-binding</keyword>
<keyword id="KW-0418">Kinase</keyword>
<keyword id="KW-0547">Nucleotide-binding</keyword>
<keyword id="KW-0808">Transferase</keyword>
<evidence type="ECO:0000255" key="1">
    <source>
        <dbReference type="HAMAP-Rule" id="MF_00602"/>
    </source>
</evidence>
<organism>
    <name type="scientific">Bacillus cereus (strain 03BB102)</name>
    <dbReference type="NCBI Taxonomy" id="572264"/>
    <lineage>
        <taxon>Bacteria</taxon>
        <taxon>Bacillati</taxon>
        <taxon>Bacillota</taxon>
        <taxon>Bacilli</taxon>
        <taxon>Bacillales</taxon>
        <taxon>Bacillaceae</taxon>
        <taxon>Bacillus</taxon>
        <taxon>Bacillus cereus group</taxon>
    </lineage>
</organism>
<name>MCSB_BACC3</name>
<feature type="chain" id="PRO_1000147058" description="Protein-arginine kinase">
    <location>
        <begin position="1"/>
        <end position="354"/>
    </location>
</feature>
<feature type="domain" description="Phosphagen kinase C-terminal" evidence="1">
    <location>
        <begin position="24"/>
        <end position="254"/>
    </location>
</feature>
<feature type="short sequence motif" description="RDXXRA motif of the pArg binding pocket involved in allosteric regulation" evidence="1">
    <location>
        <begin position="337"/>
        <end position="342"/>
    </location>
</feature>
<feature type="binding site" evidence="1">
    <location>
        <begin position="27"/>
        <end position="31"/>
    </location>
    <ligand>
        <name>ATP</name>
        <dbReference type="ChEBI" id="CHEBI:30616"/>
    </ligand>
</feature>
<feature type="binding site" evidence="1">
    <location>
        <position position="92"/>
    </location>
    <ligand>
        <name>ATP</name>
        <dbReference type="ChEBI" id="CHEBI:30616"/>
    </ligand>
</feature>
<feature type="binding site" evidence="1">
    <location>
        <position position="125"/>
    </location>
    <ligand>
        <name>ATP</name>
        <dbReference type="ChEBI" id="CHEBI:30616"/>
    </ligand>
</feature>
<feature type="binding site" evidence="1">
    <location>
        <begin position="176"/>
        <end position="180"/>
    </location>
    <ligand>
        <name>ATP</name>
        <dbReference type="ChEBI" id="CHEBI:30616"/>
    </ligand>
</feature>
<feature type="binding site" evidence="1">
    <location>
        <begin position="207"/>
        <end position="212"/>
    </location>
    <ligand>
        <name>ATP</name>
        <dbReference type="ChEBI" id="CHEBI:30616"/>
    </ligand>
</feature>